<evidence type="ECO:0000305" key="1"/>
<sequence length="97" mass="11191">MSGISSKELEELKINGWIVLENGKKIKKEFRFKDFKQSVDFLKDIQPSADALDHHPDVCVYYNRVVVELTTHDVGGLTDLDYKLAIKLDELYKMKTS</sequence>
<accession>Q97WM6</accession>
<organism>
    <name type="scientific">Saccharolobus solfataricus (strain ATCC 35092 / DSM 1617 / JCM 11322 / P2)</name>
    <name type="common">Sulfolobus solfataricus</name>
    <dbReference type="NCBI Taxonomy" id="273057"/>
    <lineage>
        <taxon>Archaea</taxon>
        <taxon>Thermoproteota</taxon>
        <taxon>Thermoprotei</taxon>
        <taxon>Sulfolobales</taxon>
        <taxon>Sulfolobaceae</taxon>
        <taxon>Saccharolobus</taxon>
    </lineage>
</organism>
<comment type="catalytic activity">
    <reaction>
        <text>(4aS,6R)-4a-hydroxy-L-erythro-5,6,7,8-tetrahydrobiopterin = (6R)-L-erythro-6,7-dihydrobiopterin + H2O</text>
        <dbReference type="Rhea" id="RHEA:11920"/>
        <dbReference type="ChEBI" id="CHEBI:15377"/>
        <dbReference type="ChEBI" id="CHEBI:15642"/>
        <dbReference type="ChEBI" id="CHEBI:43120"/>
        <dbReference type="EC" id="4.2.1.96"/>
    </reaction>
</comment>
<comment type="similarity">
    <text evidence="1">Belongs to the pterin-4-alpha-carbinolamine dehydratase family.</text>
</comment>
<comment type="sequence caution" evidence="1">
    <conflict type="erroneous initiation">
        <sequence resource="EMBL-CDS" id="AAK42360"/>
    </conflict>
</comment>
<name>PHS_SACS2</name>
<keyword id="KW-0456">Lyase</keyword>
<keyword id="KW-1185">Reference proteome</keyword>
<proteinExistence type="inferred from homology"/>
<protein>
    <recommendedName>
        <fullName>Putative pterin-4-alpha-carbinolamine dehydratase</fullName>
        <shortName>PHS</shortName>
        <ecNumber>4.2.1.96</ecNumber>
    </recommendedName>
    <alternativeName>
        <fullName>4-alpha-hydroxy-tetrahydropterin dehydratase</fullName>
    </alternativeName>
    <alternativeName>
        <fullName>Pterin carbinolamine dehydratase</fullName>
        <shortName>PCD</shortName>
    </alternativeName>
</protein>
<reference key="1">
    <citation type="journal article" date="2001" name="Proc. Natl. Acad. Sci. U.S.A.">
        <title>The complete genome of the crenarchaeon Sulfolobus solfataricus P2.</title>
        <authorList>
            <person name="She Q."/>
            <person name="Singh R.K."/>
            <person name="Confalonieri F."/>
            <person name="Zivanovic Y."/>
            <person name="Allard G."/>
            <person name="Awayez M.J."/>
            <person name="Chan-Weiher C.C.-Y."/>
            <person name="Clausen I.G."/>
            <person name="Curtis B.A."/>
            <person name="De Moors A."/>
            <person name="Erauso G."/>
            <person name="Fletcher C."/>
            <person name="Gordon P.M.K."/>
            <person name="Heikamp-de Jong I."/>
            <person name="Jeffries A.C."/>
            <person name="Kozera C.J."/>
            <person name="Medina N."/>
            <person name="Peng X."/>
            <person name="Thi-Ngoc H.P."/>
            <person name="Redder P."/>
            <person name="Schenk M.E."/>
            <person name="Theriault C."/>
            <person name="Tolstrup N."/>
            <person name="Charlebois R.L."/>
            <person name="Doolittle W.F."/>
            <person name="Duguet M."/>
            <person name="Gaasterland T."/>
            <person name="Garrett R.A."/>
            <person name="Ragan M.A."/>
            <person name="Sensen C.W."/>
            <person name="Van der Oost J."/>
        </authorList>
    </citation>
    <scope>NUCLEOTIDE SEQUENCE [LARGE SCALE GENOMIC DNA]</scope>
    <source>
        <strain>ATCC 35092 / DSM 1617 / JCM 11322 / P2</strain>
    </source>
</reference>
<dbReference type="EC" id="4.2.1.96"/>
<dbReference type="EMBL" id="AE006641">
    <property type="protein sequence ID" value="AAK42360.1"/>
    <property type="status" value="ALT_INIT"/>
    <property type="molecule type" value="Genomic_DNA"/>
</dbReference>
<dbReference type="PIR" id="A99388">
    <property type="entry name" value="A99388"/>
</dbReference>
<dbReference type="RefSeq" id="WP_009992110.1">
    <property type="nucleotide sequence ID" value="NC_002754.1"/>
</dbReference>
<dbReference type="SMR" id="Q97WM6"/>
<dbReference type="FunCoup" id="Q97WM6">
    <property type="interactions" value="69"/>
</dbReference>
<dbReference type="STRING" id="273057.SSO2187"/>
<dbReference type="PaxDb" id="273057-SSO2187"/>
<dbReference type="EnsemblBacteria" id="AAK42360">
    <property type="protein sequence ID" value="AAK42360"/>
    <property type="gene ID" value="SSO2187"/>
</dbReference>
<dbReference type="KEGG" id="sso:SSO2187"/>
<dbReference type="PATRIC" id="fig|273057.12.peg.2283"/>
<dbReference type="eggNOG" id="arCOG02939">
    <property type="taxonomic scope" value="Archaea"/>
</dbReference>
<dbReference type="HOGENOM" id="CLU_081974_4_5_2"/>
<dbReference type="InParanoid" id="Q97WM6"/>
<dbReference type="PhylomeDB" id="Q97WM6"/>
<dbReference type="Proteomes" id="UP000001974">
    <property type="component" value="Chromosome"/>
</dbReference>
<dbReference type="GO" id="GO:0008124">
    <property type="term" value="F:4-alpha-hydroxytetrahydrobiopterin dehydratase activity"/>
    <property type="evidence" value="ECO:0000318"/>
    <property type="project" value="GO_Central"/>
</dbReference>
<dbReference type="GO" id="GO:0006729">
    <property type="term" value="P:tetrahydrobiopterin biosynthetic process"/>
    <property type="evidence" value="ECO:0007669"/>
    <property type="project" value="InterPro"/>
</dbReference>
<dbReference type="CDD" id="cd00488">
    <property type="entry name" value="PCD_DCoH"/>
    <property type="match status" value="1"/>
</dbReference>
<dbReference type="Gene3D" id="3.30.1360.20">
    <property type="entry name" value="Transcriptional coactivator/pterin dehydratase"/>
    <property type="match status" value="1"/>
</dbReference>
<dbReference type="HAMAP" id="MF_00434">
    <property type="entry name" value="Pterin_4_alpha"/>
    <property type="match status" value="1"/>
</dbReference>
<dbReference type="InterPro" id="IPR036428">
    <property type="entry name" value="PCD_sf"/>
</dbReference>
<dbReference type="InterPro" id="IPR001533">
    <property type="entry name" value="Pterin_deHydtase"/>
</dbReference>
<dbReference type="NCBIfam" id="NF002017">
    <property type="entry name" value="PRK00823.1-2"/>
    <property type="match status" value="1"/>
</dbReference>
<dbReference type="PANTHER" id="PTHR12599">
    <property type="entry name" value="PTERIN-4-ALPHA-CARBINOLAMINE DEHYDRATASE"/>
    <property type="match status" value="1"/>
</dbReference>
<dbReference type="PANTHER" id="PTHR12599:SF0">
    <property type="entry name" value="PTERIN-4-ALPHA-CARBINOLAMINE DEHYDRATASE"/>
    <property type="match status" value="1"/>
</dbReference>
<dbReference type="Pfam" id="PF01329">
    <property type="entry name" value="Pterin_4a"/>
    <property type="match status" value="1"/>
</dbReference>
<dbReference type="SUPFAM" id="SSF55248">
    <property type="entry name" value="PCD-like"/>
    <property type="match status" value="1"/>
</dbReference>
<gene>
    <name type="ordered locus">SSO2187</name>
</gene>
<feature type="chain" id="PRO_0000063111" description="Putative pterin-4-alpha-carbinolamine dehydratase">
    <location>
        <begin position="1"/>
        <end position="97"/>
    </location>
</feature>